<dbReference type="EMBL" id="L35450">
    <property type="protein sequence ID" value="AAA74614.1"/>
    <property type="molecule type" value="Genomic_DNA"/>
</dbReference>
<dbReference type="HOGENOM" id="CLU_2960115_0_0_1"/>
<dbReference type="GO" id="GO:0000786">
    <property type="term" value="C:nucleosome"/>
    <property type="evidence" value="ECO:0007669"/>
    <property type="project" value="UniProtKB-KW"/>
</dbReference>
<dbReference type="GO" id="GO:0005634">
    <property type="term" value="C:nucleus"/>
    <property type="evidence" value="ECO:0007669"/>
    <property type="project" value="UniProtKB-SubCell"/>
</dbReference>
<dbReference type="GO" id="GO:0003677">
    <property type="term" value="F:DNA binding"/>
    <property type="evidence" value="ECO:0007669"/>
    <property type="project" value="UniProtKB-KW"/>
</dbReference>
<dbReference type="GO" id="GO:0030261">
    <property type="term" value="P:chromosome condensation"/>
    <property type="evidence" value="ECO:0007669"/>
    <property type="project" value="UniProtKB-KW"/>
</dbReference>
<dbReference type="GO" id="GO:0035092">
    <property type="term" value="P:sperm DNA condensation"/>
    <property type="evidence" value="ECO:0007669"/>
    <property type="project" value="InterPro"/>
</dbReference>
<dbReference type="InterPro" id="IPR000221">
    <property type="entry name" value="Protamine_P1"/>
</dbReference>
<dbReference type="PROSITE" id="PS00048">
    <property type="entry name" value="PROTAMINE_P1"/>
    <property type="match status" value="1"/>
</dbReference>
<evidence type="ECO:0000256" key="1">
    <source>
        <dbReference type="SAM" id="MobiDB-lite"/>
    </source>
</evidence>
<evidence type="ECO:0000305" key="2"/>
<name>HSP1_NOTEU</name>
<protein>
    <recommendedName>
        <fullName>Sperm protamine P1</fullName>
    </recommendedName>
</protein>
<gene>
    <name type="primary">PRM1</name>
</gene>
<sequence>MARYRHSRSRSRSRYRRRRRRRSRYRSRRRRSRGRRRRRSRRGRRRRGYSRRRYSRRRRRRY</sequence>
<proteinExistence type="evidence at transcript level"/>
<accession>P42138</accession>
<organism>
    <name type="scientific">Notamacropus eugenii</name>
    <name type="common">Tammar wallaby</name>
    <name type="synonym">Macropus eugenii</name>
    <dbReference type="NCBI Taxonomy" id="9315"/>
    <lineage>
        <taxon>Eukaryota</taxon>
        <taxon>Metazoa</taxon>
        <taxon>Chordata</taxon>
        <taxon>Craniata</taxon>
        <taxon>Vertebrata</taxon>
        <taxon>Euteleostomi</taxon>
        <taxon>Mammalia</taxon>
        <taxon>Metatheria</taxon>
        <taxon>Diprotodontia</taxon>
        <taxon>Macropodidae</taxon>
        <taxon>Notamacropus</taxon>
    </lineage>
</organism>
<comment type="function">
    <text>Protamines substitute for histones in the chromatin of sperm during the haploid phase of spermatogenesis. They compact sperm DNA into a highly condensed, stable and inactive complex.</text>
</comment>
<comment type="subcellular location">
    <subcellularLocation>
        <location>Nucleus</location>
    </subcellularLocation>
    <subcellularLocation>
        <location>Chromosome</location>
    </subcellularLocation>
</comment>
<comment type="tissue specificity">
    <text>Testis.</text>
</comment>
<comment type="similarity">
    <text evidence="2">Belongs to the protamine P1 family.</text>
</comment>
<keyword id="KW-0158">Chromosome</keyword>
<keyword id="KW-0217">Developmental protein</keyword>
<keyword id="KW-0221">Differentiation</keyword>
<keyword id="KW-0226">DNA condensation</keyword>
<keyword id="KW-0238">DNA-binding</keyword>
<keyword id="KW-0544">Nucleosome core</keyword>
<keyword id="KW-0539">Nucleus</keyword>
<keyword id="KW-0744">Spermatogenesis</keyword>
<reference key="1">
    <citation type="journal article" date="1995" name="Proc. R. Soc. B">
        <title>Molecular phylogeny and evolution of marsupial protamine P1 genes.</title>
        <authorList>
            <person name="Retief J.D."/>
            <person name="Krajewski C."/>
            <person name="Westerman M."/>
            <person name="Winkfein R.J."/>
            <person name="Dixon G.H."/>
        </authorList>
    </citation>
    <scope>NUCLEOTIDE SEQUENCE [GENOMIC DNA]</scope>
    <source>
        <tissue>Sperm</tissue>
    </source>
</reference>
<feature type="chain" id="PRO_0000191489" description="Sperm protamine P1">
    <location>
        <begin position="1"/>
        <end position="62"/>
    </location>
</feature>
<feature type="region of interest" description="Disordered" evidence="1">
    <location>
        <begin position="1"/>
        <end position="62"/>
    </location>
</feature>